<sequence length="172" mass="20047">MGIGVNTDLPRNEQIKAPKVRVVDENGKMIGVMPTRKALELAREKGLDLVLVAPNENPPVARIMDYGKYKYQLTKKQKENKKKPVQMKQMKFRLKIDEHDYQTKVKHIRRFLEDGHKVRVVVMFIGREMMFAEKGKEILERVIKDTEDLATVESPPKMEGRDMWMVLKPKNS</sequence>
<protein>
    <recommendedName>
        <fullName evidence="1">Translation initiation factor IF-3</fullName>
    </recommendedName>
</protein>
<feature type="chain" id="PRO_0000177597" description="Translation initiation factor IF-3">
    <location>
        <begin position="1"/>
        <end position="172"/>
    </location>
</feature>
<gene>
    <name evidence="1" type="primary">infC</name>
    <name type="ordered locus">TM_1590</name>
</gene>
<reference key="1">
    <citation type="journal article" date="1999" name="Nature">
        <title>Evidence for lateral gene transfer between Archaea and Bacteria from genome sequence of Thermotoga maritima.</title>
        <authorList>
            <person name="Nelson K.E."/>
            <person name="Clayton R.A."/>
            <person name="Gill S.R."/>
            <person name="Gwinn M.L."/>
            <person name="Dodson R.J."/>
            <person name="Haft D.H."/>
            <person name="Hickey E.K."/>
            <person name="Peterson J.D."/>
            <person name="Nelson W.C."/>
            <person name="Ketchum K.A."/>
            <person name="McDonald L.A."/>
            <person name="Utterback T.R."/>
            <person name="Malek J.A."/>
            <person name="Linher K.D."/>
            <person name="Garrett M.M."/>
            <person name="Stewart A.M."/>
            <person name="Cotton M.D."/>
            <person name="Pratt M.S."/>
            <person name="Phillips C.A."/>
            <person name="Richardson D.L."/>
            <person name="Heidelberg J.F."/>
            <person name="Sutton G.G."/>
            <person name="Fleischmann R.D."/>
            <person name="Eisen J.A."/>
            <person name="White O."/>
            <person name="Salzberg S.L."/>
            <person name="Smith H.O."/>
            <person name="Venter J.C."/>
            <person name="Fraser C.M."/>
        </authorList>
    </citation>
    <scope>NUCLEOTIDE SEQUENCE [LARGE SCALE GENOMIC DNA]</scope>
    <source>
        <strain>ATCC 43589 / DSM 3109 / JCM 10099 / NBRC 100826 / MSB8</strain>
    </source>
</reference>
<dbReference type="EMBL" id="AE000512">
    <property type="protein sequence ID" value="AAD36657.1"/>
    <property type="status" value="ALT_INIT"/>
    <property type="molecule type" value="Genomic_DNA"/>
</dbReference>
<dbReference type="PIR" id="B72233">
    <property type="entry name" value="B72233"/>
</dbReference>
<dbReference type="RefSeq" id="NP_229390.1">
    <property type="nucleotide sequence ID" value="NC_000853.1"/>
</dbReference>
<dbReference type="SMR" id="Q9X1S6"/>
<dbReference type="FunCoup" id="Q9X1S6">
    <property type="interactions" value="367"/>
</dbReference>
<dbReference type="STRING" id="243274.TM_1590"/>
<dbReference type="PaxDb" id="243274-THEMA_06305"/>
<dbReference type="EnsemblBacteria" id="AAD36657">
    <property type="protein sequence ID" value="AAD36657"/>
    <property type="gene ID" value="TM_1590"/>
</dbReference>
<dbReference type="KEGG" id="tma:TM1590"/>
<dbReference type="PATRIC" id="fig|243274.5.peg.1609"/>
<dbReference type="eggNOG" id="COG0290">
    <property type="taxonomic scope" value="Bacteria"/>
</dbReference>
<dbReference type="InParanoid" id="Q9X1S6"/>
<dbReference type="OrthoDB" id="9806014at2"/>
<dbReference type="Proteomes" id="UP000008183">
    <property type="component" value="Chromosome"/>
</dbReference>
<dbReference type="GO" id="GO:0005829">
    <property type="term" value="C:cytosol"/>
    <property type="evidence" value="ECO:0000318"/>
    <property type="project" value="GO_Central"/>
</dbReference>
<dbReference type="GO" id="GO:0043022">
    <property type="term" value="F:ribosome binding"/>
    <property type="evidence" value="ECO:0000318"/>
    <property type="project" value="GO_Central"/>
</dbReference>
<dbReference type="GO" id="GO:0003743">
    <property type="term" value="F:translation initiation factor activity"/>
    <property type="evidence" value="ECO:0000318"/>
    <property type="project" value="GO_Central"/>
</dbReference>
<dbReference type="GO" id="GO:0032790">
    <property type="term" value="P:ribosome disassembly"/>
    <property type="evidence" value="ECO:0000318"/>
    <property type="project" value="GO_Central"/>
</dbReference>
<dbReference type="FunFam" id="3.10.20.80:FF:000001">
    <property type="entry name" value="Translation initiation factor IF-3"/>
    <property type="match status" value="1"/>
</dbReference>
<dbReference type="FunFam" id="3.30.110.10:FF:000001">
    <property type="entry name" value="Translation initiation factor IF-3"/>
    <property type="match status" value="1"/>
</dbReference>
<dbReference type="Gene3D" id="3.30.110.10">
    <property type="entry name" value="Translation initiation factor 3 (IF-3), C-terminal domain"/>
    <property type="match status" value="1"/>
</dbReference>
<dbReference type="Gene3D" id="3.10.20.80">
    <property type="entry name" value="Translation initiation factor 3 (IF-3), N-terminal domain"/>
    <property type="match status" value="1"/>
</dbReference>
<dbReference type="HAMAP" id="MF_00080">
    <property type="entry name" value="IF_3"/>
    <property type="match status" value="1"/>
</dbReference>
<dbReference type="InterPro" id="IPR036788">
    <property type="entry name" value="T_IF-3_C_sf"/>
</dbReference>
<dbReference type="InterPro" id="IPR036787">
    <property type="entry name" value="T_IF-3_N_sf"/>
</dbReference>
<dbReference type="InterPro" id="IPR019813">
    <property type="entry name" value="Translation_initiation_fac3_CS"/>
</dbReference>
<dbReference type="InterPro" id="IPR001288">
    <property type="entry name" value="Translation_initiation_fac_3"/>
</dbReference>
<dbReference type="InterPro" id="IPR019815">
    <property type="entry name" value="Translation_initiation_fac_3_C"/>
</dbReference>
<dbReference type="InterPro" id="IPR019814">
    <property type="entry name" value="Translation_initiation_fac_3_N"/>
</dbReference>
<dbReference type="NCBIfam" id="TIGR00168">
    <property type="entry name" value="infC"/>
    <property type="match status" value="1"/>
</dbReference>
<dbReference type="PANTHER" id="PTHR10938">
    <property type="entry name" value="TRANSLATION INITIATION FACTOR IF-3"/>
    <property type="match status" value="1"/>
</dbReference>
<dbReference type="PANTHER" id="PTHR10938:SF0">
    <property type="entry name" value="TRANSLATION INITIATION FACTOR IF-3, MITOCHONDRIAL"/>
    <property type="match status" value="1"/>
</dbReference>
<dbReference type="Pfam" id="PF00707">
    <property type="entry name" value="IF3_C"/>
    <property type="match status" value="1"/>
</dbReference>
<dbReference type="Pfam" id="PF05198">
    <property type="entry name" value="IF3_N"/>
    <property type="match status" value="1"/>
</dbReference>
<dbReference type="SUPFAM" id="SSF55200">
    <property type="entry name" value="Translation initiation factor IF3, C-terminal domain"/>
    <property type="match status" value="1"/>
</dbReference>
<dbReference type="SUPFAM" id="SSF54364">
    <property type="entry name" value="Translation initiation factor IF3, N-terminal domain"/>
    <property type="match status" value="1"/>
</dbReference>
<dbReference type="PROSITE" id="PS00938">
    <property type="entry name" value="IF3"/>
    <property type="match status" value="1"/>
</dbReference>
<comment type="function">
    <text evidence="1">IF-3 binds to the 30S ribosomal subunit and shifts the equilibrium between 70S ribosomes and their 50S and 30S subunits in favor of the free subunits, thus enhancing the availability of 30S subunits on which protein synthesis initiation begins.</text>
</comment>
<comment type="subunit">
    <text evidence="1">Monomer.</text>
</comment>
<comment type="subcellular location">
    <subcellularLocation>
        <location evidence="1">Cytoplasm</location>
    </subcellularLocation>
</comment>
<comment type="similarity">
    <text evidence="1">Belongs to the IF-3 family.</text>
</comment>
<comment type="sequence caution" evidence="2">
    <conflict type="erroneous initiation">
        <sequence resource="EMBL-CDS" id="AAD36657"/>
    </conflict>
</comment>
<keyword id="KW-0963">Cytoplasm</keyword>
<keyword id="KW-0396">Initiation factor</keyword>
<keyword id="KW-0648">Protein biosynthesis</keyword>
<keyword id="KW-1185">Reference proteome</keyword>
<organism>
    <name type="scientific">Thermotoga maritima (strain ATCC 43589 / DSM 3109 / JCM 10099 / NBRC 100826 / MSB8)</name>
    <dbReference type="NCBI Taxonomy" id="243274"/>
    <lineage>
        <taxon>Bacteria</taxon>
        <taxon>Thermotogati</taxon>
        <taxon>Thermotogota</taxon>
        <taxon>Thermotogae</taxon>
        <taxon>Thermotogales</taxon>
        <taxon>Thermotogaceae</taxon>
        <taxon>Thermotoga</taxon>
    </lineage>
</organism>
<proteinExistence type="inferred from homology"/>
<name>IF3_THEMA</name>
<evidence type="ECO:0000255" key="1">
    <source>
        <dbReference type="HAMAP-Rule" id="MF_00080"/>
    </source>
</evidence>
<evidence type="ECO:0000305" key="2"/>
<accession>Q9X1S6</accession>